<accession>Q10215</accession>
<organism>
    <name type="scientific">Schizosaccharomyces pombe (strain 972 / ATCC 24843)</name>
    <name type="common">Fission yeast</name>
    <dbReference type="NCBI Taxonomy" id="284812"/>
    <lineage>
        <taxon>Eukaryota</taxon>
        <taxon>Fungi</taxon>
        <taxon>Dikarya</taxon>
        <taxon>Ascomycota</taxon>
        <taxon>Taphrinomycotina</taxon>
        <taxon>Schizosaccharomycetes</taxon>
        <taxon>Schizosaccharomycetales</taxon>
        <taxon>Schizosaccharomycetaceae</taxon>
        <taxon>Schizosaccharomyces</taxon>
    </lineage>
</organism>
<name>RDL_SCHPO</name>
<protein>
    <recommendedName>
        <fullName>Putative thiosulfate sulfurtransferase, mitochondrial</fullName>
        <ecNumber>2.8.1.1</ecNumber>
    </recommendedName>
    <alternativeName>
        <fullName>Rhodanese-like protein</fullName>
    </alternativeName>
</protein>
<proteinExistence type="inferred from homology"/>
<keyword id="KW-0496">Mitochondrion</keyword>
<keyword id="KW-1185">Reference proteome</keyword>
<keyword id="KW-0808">Transferase</keyword>
<keyword id="KW-0809">Transit peptide</keyword>
<feature type="transit peptide" description="Mitochondrion" evidence="2">
    <location>
        <begin position="1"/>
        <end position="25"/>
    </location>
</feature>
<feature type="chain" id="PRO_0000116484" description="Putative thiosulfate sulfurtransferase, mitochondrial">
    <location>
        <begin position="26"/>
        <end position="142"/>
    </location>
</feature>
<feature type="domain" description="Rhodanese" evidence="3">
    <location>
        <begin position="43"/>
        <end position="140"/>
    </location>
</feature>
<feature type="active site" description="Cysteine persulfide intermediate" evidence="3">
    <location>
        <position position="104"/>
    </location>
</feature>
<gene>
    <name type="ORF">SPAC4H3.07c</name>
</gene>
<dbReference type="EC" id="2.8.1.1"/>
<dbReference type="EMBL" id="CU329670">
    <property type="protein sequence ID" value="CAA93346.2"/>
    <property type="molecule type" value="Genomic_DNA"/>
</dbReference>
<dbReference type="PIR" id="T38887">
    <property type="entry name" value="T38887"/>
</dbReference>
<dbReference type="SMR" id="Q10215"/>
<dbReference type="BioGRID" id="279844">
    <property type="interactions" value="38"/>
</dbReference>
<dbReference type="FunCoup" id="Q10215">
    <property type="interactions" value="431"/>
</dbReference>
<dbReference type="STRING" id="284812.Q10215"/>
<dbReference type="iPTMnet" id="Q10215"/>
<dbReference type="PaxDb" id="4896-SPAC4H3.07c.1"/>
<dbReference type="EnsemblFungi" id="SPAC4H3.07c.1">
    <property type="protein sequence ID" value="SPAC4H3.07c.1:pep"/>
    <property type="gene ID" value="SPAC4H3.07c"/>
</dbReference>
<dbReference type="KEGG" id="spo:2543423"/>
<dbReference type="PomBase" id="SPAC4H3.07c"/>
<dbReference type="VEuPathDB" id="FungiDB:SPAC4H3.07c"/>
<dbReference type="eggNOG" id="KOG1530">
    <property type="taxonomic scope" value="Eukaryota"/>
</dbReference>
<dbReference type="HOGENOM" id="CLU_089574_0_2_1"/>
<dbReference type="InParanoid" id="Q10215"/>
<dbReference type="OMA" id="KTFNTIC"/>
<dbReference type="PRO" id="PR:Q10215"/>
<dbReference type="Proteomes" id="UP000002485">
    <property type="component" value="Chromosome I"/>
</dbReference>
<dbReference type="GO" id="GO:0005739">
    <property type="term" value="C:mitochondrion"/>
    <property type="evidence" value="ECO:0007005"/>
    <property type="project" value="PomBase"/>
</dbReference>
<dbReference type="GO" id="GO:0004792">
    <property type="term" value="F:thiosulfate-cyanide sulfurtransferase activity"/>
    <property type="evidence" value="ECO:0000318"/>
    <property type="project" value="GO_Central"/>
</dbReference>
<dbReference type="CDD" id="cd01519">
    <property type="entry name" value="RHOD_HSP67B2"/>
    <property type="match status" value="1"/>
</dbReference>
<dbReference type="Gene3D" id="3.40.250.10">
    <property type="entry name" value="Rhodanese-like domain"/>
    <property type="match status" value="1"/>
</dbReference>
<dbReference type="InterPro" id="IPR001763">
    <property type="entry name" value="Rhodanese-like_dom"/>
</dbReference>
<dbReference type="InterPro" id="IPR036873">
    <property type="entry name" value="Rhodanese-like_dom_sf"/>
</dbReference>
<dbReference type="PANTHER" id="PTHR44086">
    <property type="entry name" value="THIOSULFATE SULFURTRANSFERASE RDL2, MITOCHONDRIAL-RELATED"/>
    <property type="match status" value="1"/>
</dbReference>
<dbReference type="PANTHER" id="PTHR44086:SF10">
    <property type="entry name" value="THIOSULFATE SULFURTRANSFERASE_RHODANESE-LIKE DOMAIN-CONTAINING PROTEIN 3"/>
    <property type="match status" value="1"/>
</dbReference>
<dbReference type="Pfam" id="PF00581">
    <property type="entry name" value="Rhodanese"/>
    <property type="match status" value="1"/>
</dbReference>
<dbReference type="SMART" id="SM00450">
    <property type="entry name" value="RHOD"/>
    <property type="match status" value="1"/>
</dbReference>
<dbReference type="SUPFAM" id="SSF52821">
    <property type="entry name" value="Rhodanese/Cell cycle control phosphatase"/>
    <property type="match status" value="1"/>
</dbReference>
<dbReference type="PROSITE" id="PS50206">
    <property type="entry name" value="RHODANESE_3"/>
    <property type="match status" value="1"/>
</dbReference>
<comment type="function">
    <text evidence="1">Thiosulfate sulfurtransferase which catalyzes the transfer of sulfane sulfur from thiosulfate to cyanide.</text>
</comment>
<comment type="catalytic activity">
    <reaction>
        <text>thiosulfate + hydrogen cyanide = thiocyanate + sulfite + 2 H(+)</text>
        <dbReference type="Rhea" id="RHEA:16881"/>
        <dbReference type="ChEBI" id="CHEBI:15378"/>
        <dbReference type="ChEBI" id="CHEBI:17359"/>
        <dbReference type="ChEBI" id="CHEBI:18022"/>
        <dbReference type="ChEBI" id="CHEBI:18407"/>
        <dbReference type="ChEBI" id="CHEBI:33542"/>
        <dbReference type="EC" id="2.8.1.1"/>
    </reaction>
</comment>
<comment type="subcellular location">
    <subcellularLocation>
        <location evidence="4">Mitochondrion</location>
    </subcellularLocation>
</comment>
<sequence length="142" mass="16185">MFSKTLSVSRLLMTRSFYSSTVVKNVSIFDFEKVYNLSKRPTGDKSTVLIDVREPDEFKQGAIETSYNLPVGKIEEAMKLSDEEFSKTYGFSKPVFEDNVVVYCRSGRRSTTASDILTKLGYKNIGNYTGSWLEWSDKIKSK</sequence>
<evidence type="ECO:0000250" key="1"/>
<evidence type="ECO:0000255" key="2"/>
<evidence type="ECO:0000255" key="3">
    <source>
        <dbReference type="PROSITE-ProRule" id="PRU00173"/>
    </source>
</evidence>
<evidence type="ECO:0000269" key="4">
    <source>
    </source>
</evidence>
<reference key="1">
    <citation type="journal article" date="2002" name="Nature">
        <title>The genome sequence of Schizosaccharomyces pombe.</title>
        <authorList>
            <person name="Wood V."/>
            <person name="Gwilliam R."/>
            <person name="Rajandream M.A."/>
            <person name="Lyne M.H."/>
            <person name="Lyne R."/>
            <person name="Stewart A."/>
            <person name="Sgouros J.G."/>
            <person name="Peat N."/>
            <person name="Hayles J."/>
            <person name="Baker S.G."/>
            <person name="Basham D."/>
            <person name="Bowman S."/>
            <person name="Brooks K."/>
            <person name="Brown D."/>
            <person name="Brown S."/>
            <person name="Chillingworth T."/>
            <person name="Churcher C.M."/>
            <person name="Collins M."/>
            <person name="Connor R."/>
            <person name="Cronin A."/>
            <person name="Davis P."/>
            <person name="Feltwell T."/>
            <person name="Fraser A."/>
            <person name="Gentles S."/>
            <person name="Goble A."/>
            <person name="Hamlin N."/>
            <person name="Harris D.E."/>
            <person name="Hidalgo J."/>
            <person name="Hodgson G."/>
            <person name="Holroyd S."/>
            <person name="Hornsby T."/>
            <person name="Howarth S."/>
            <person name="Huckle E.J."/>
            <person name="Hunt S."/>
            <person name="Jagels K."/>
            <person name="James K.D."/>
            <person name="Jones L."/>
            <person name="Jones M."/>
            <person name="Leather S."/>
            <person name="McDonald S."/>
            <person name="McLean J."/>
            <person name="Mooney P."/>
            <person name="Moule S."/>
            <person name="Mungall K.L."/>
            <person name="Murphy L.D."/>
            <person name="Niblett D."/>
            <person name="Odell C."/>
            <person name="Oliver K."/>
            <person name="O'Neil S."/>
            <person name="Pearson D."/>
            <person name="Quail M.A."/>
            <person name="Rabbinowitsch E."/>
            <person name="Rutherford K.M."/>
            <person name="Rutter S."/>
            <person name="Saunders D."/>
            <person name="Seeger K."/>
            <person name="Sharp S."/>
            <person name="Skelton J."/>
            <person name="Simmonds M.N."/>
            <person name="Squares R."/>
            <person name="Squares S."/>
            <person name="Stevens K."/>
            <person name="Taylor K."/>
            <person name="Taylor R.G."/>
            <person name="Tivey A."/>
            <person name="Walsh S.V."/>
            <person name="Warren T."/>
            <person name="Whitehead S."/>
            <person name="Woodward J.R."/>
            <person name="Volckaert G."/>
            <person name="Aert R."/>
            <person name="Robben J."/>
            <person name="Grymonprez B."/>
            <person name="Weltjens I."/>
            <person name="Vanstreels E."/>
            <person name="Rieger M."/>
            <person name="Schaefer M."/>
            <person name="Mueller-Auer S."/>
            <person name="Gabel C."/>
            <person name="Fuchs M."/>
            <person name="Duesterhoeft A."/>
            <person name="Fritzc C."/>
            <person name="Holzer E."/>
            <person name="Moestl D."/>
            <person name="Hilbert H."/>
            <person name="Borzym K."/>
            <person name="Langer I."/>
            <person name="Beck A."/>
            <person name="Lehrach H."/>
            <person name="Reinhardt R."/>
            <person name="Pohl T.M."/>
            <person name="Eger P."/>
            <person name="Zimmermann W."/>
            <person name="Wedler H."/>
            <person name="Wambutt R."/>
            <person name="Purnelle B."/>
            <person name="Goffeau A."/>
            <person name="Cadieu E."/>
            <person name="Dreano S."/>
            <person name="Gloux S."/>
            <person name="Lelaure V."/>
            <person name="Mottier S."/>
            <person name="Galibert F."/>
            <person name="Aves S.J."/>
            <person name="Xiang Z."/>
            <person name="Hunt C."/>
            <person name="Moore K."/>
            <person name="Hurst S.M."/>
            <person name="Lucas M."/>
            <person name="Rochet M."/>
            <person name="Gaillardin C."/>
            <person name="Tallada V.A."/>
            <person name="Garzon A."/>
            <person name="Thode G."/>
            <person name="Daga R.R."/>
            <person name="Cruzado L."/>
            <person name="Jimenez J."/>
            <person name="Sanchez M."/>
            <person name="del Rey F."/>
            <person name="Benito J."/>
            <person name="Dominguez A."/>
            <person name="Revuelta J.L."/>
            <person name="Moreno S."/>
            <person name="Armstrong J."/>
            <person name="Forsburg S.L."/>
            <person name="Cerutti L."/>
            <person name="Lowe T."/>
            <person name="McCombie W.R."/>
            <person name="Paulsen I."/>
            <person name="Potashkin J."/>
            <person name="Shpakovski G.V."/>
            <person name="Ussery D."/>
            <person name="Barrell B.G."/>
            <person name="Nurse P."/>
        </authorList>
    </citation>
    <scope>NUCLEOTIDE SEQUENCE [LARGE SCALE GENOMIC DNA]</scope>
    <source>
        <strain>972 / ATCC 24843</strain>
    </source>
</reference>
<reference key="2">
    <citation type="journal article" date="2011" name="Science">
        <title>Comparative functional genomics of the fission yeasts.</title>
        <authorList>
            <person name="Rhind N."/>
            <person name="Chen Z."/>
            <person name="Yassour M."/>
            <person name="Thompson D.A."/>
            <person name="Haas B.J."/>
            <person name="Habib N."/>
            <person name="Wapinski I."/>
            <person name="Roy S."/>
            <person name="Lin M.F."/>
            <person name="Heiman D.I."/>
            <person name="Young S.K."/>
            <person name="Furuya K."/>
            <person name="Guo Y."/>
            <person name="Pidoux A."/>
            <person name="Chen H.M."/>
            <person name="Robbertse B."/>
            <person name="Goldberg J.M."/>
            <person name="Aoki K."/>
            <person name="Bayne E.H."/>
            <person name="Berlin A.M."/>
            <person name="Desjardins C.A."/>
            <person name="Dobbs E."/>
            <person name="Dukaj L."/>
            <person name="Fan L."/>
            <person name="FitzGerald M.G."/>
            <person name="French C."/>
            <person name="Gujja S."/>
            <person name="Hansen K."/>
            <person name="Keifenheim D."/>
            <person name="Levin J.Z."/>
            <person name="Mosher R.A."/>
            <person name="Mueller C.A."/>
            <person name="Pfiffner J."/>
            <person name="Priest M."/>
            <person name="Russ C."/>
            <person name="Smialowska A."/>
            <person name="Swoboda P."/>
            <person name="Sykes S.M."/>
            <person name="Vaughn M."/>
            <person name="Vengrova S."/>
            <person name="Yoder R."/>
            <person name="Zeng Q."/>
            <person name="Allshire R."/>
            <person name="Baulcombe D."/>
            <person name="Birren B.W."/>
            <person name="Brown W."/>
            <person name="Ekwall K."/>
            <person name="Kellis M."/>
            <person name="Leatherwood J."/>
            <person name="Levin H."/>
            <person name="Margalit H."/>
            <person name="Martienssen R."/>
            <person name="Nieduszynski C.A."/>
            <person name="Spatafora J.W."/>
            <person name="Friedman N."/>
            <person name="Dalgaard J.Z."/>
            <person name="Baumann P."/>
            <person name="Niki H."/>
            <person name="Regev A."/>
            <person name="Nusbaum C."/>
        </authorList>
    </citation>
    <scope>REVISION OF GENE MODEL</scope>
</reference>
<reference key="3">
    <citation type="journal article" date="2006" name="Nat. Biotechnol.">
        <title>ORFeome cloning and global analysis of protein localization in the fission yeast Schizosaccharomyces pombe.</title>
        <authorList>
            <person name="Matsuyama A."/>
            <person name="Arai R."/>
            <person name="Yashiroda Y."/>
            <person name="Shirai A."/>
            <person name="Kamata A."/>
            <person name="Sekido S."/>
            <person name="Kobayashi Y."/>
            <person name="Hashimoto A."/>
            <person name="Hamamoto M."/>
            <person name="Hiraoka Y."/>
            <person name="Horinouchi S."/>
            <person name="Yoshida M."/>
        </authorList>
    </citation>
    <scope>SUBCELLULAR LOCATION [LARGE SCALE ANALYSIS]</scope>
</reference>